<proteinExistence type="evidence at transcript level"/>
<protein>
    <recommendedName>
        <fullName>Type-1 angiotensin II receptor</fullName>
    </recommendedName>
    <alternativeName>
        <fullName evidence="7">Angiotensin II type-1 receptor</fullName>
        <shortName>AT1 receptor</shortName>
    </alternativeName>
</protein>
<organism>
    <name type="scientific">Cavia porcellus</name>
    <name type="common">Guinea pig</name>
    <dbReference type="NCBI Taxonomy" id="10141"/>
    <lineage>
        <taxon>Eukaryota</taxon>
        <taxon>Metazoa</taxon>
        <taxon>Chordata</taxon>
        <taxon>Craniata</taxon>
        <taxon>Vertebrata</taxon>
        <taxon>Euteleostomi</taxon>
        <taxon>Mammalia</taxon>
        <taxon>Eutheria</taxon>
        <taxon>Euarchontoglires</taxon>
        <taxon>Glires</taxon>
        <taxon>Rodentia</taxon>
        <taxon>Hystricomorpha</taxon>
        <taxon>Caviidae</taxon>
        <taxon>Cavia</taxon>
    </lineage>
</organism>
<feature type="chain" id="PRO_0000069152" description="Type-1 angiotensin II receptor">
    <location>
        <begin position="1"/>
        <end position="359"/>
    </location>
</feature>
<feature type="topological domain" description="Extracellular" evidence="2">
    <location>
        <begin position="1"/>
        <end position="25"/>
    </location>
</feature>
<feature type="transmembrane region" description="Helical; Name=1" evidence="2">
    <location>
        <begin position="26"/>
        <end position="55"/>
    </location>
</feature>
<feature type="topological domain" description="Cytoplasmic" evidence="2">
    <location>
        <begin position="56"/>
        <end position="61"/>
    </location>
</feature>
<feature type="transmembrane region" description="Helical; Name=2" evidence="2">
    <location>
        <begin position="62"/>
        <end position="89"/>
    </location>
</feature>
<feature type="topological domain" description="Extracellular" evidence="2">
    <location>
        <begin position="90"/>
        <end position="98"/>
    </location>
</feature>
<feature type="transmembrane region" description="Helical; Name=3" evidence="2">
    <location>
        <begin position="99"/>
        <end position="125"/>
    </location>
</feature>
<feature type="topological domain" description="Cytoplasmic" evidence="2">
    <location>
        <begin position="126"/>
        <end position="141"/>
    </location>
</feature>
<feature type="transmembrane region" description="Helical; Name=4" evidence="2">
    <location>
        <begin position="142"/>
        <end position="165"/>
    </location>
</feature>
<feature type="topological domain" description="Extracellular" evidence="2">
    <location>
        <begin position="166"/>
        <end position="190"/>
    </location>
</feature>
<feature type="transmembrane region" description="Helical; Name=5" evidence="2">
    <location>
        <begin position="191"/>
        <end position="216"/>
    </location>
</feature>
<feature type="topological domain" description="Cytoplasmic" evidence="2">
    <location>
        <begin position="217"/>
        <end position="239"/>
    </location>
</feature>
<feature type="transmembrane region" description="Helical; Name=6" evidence="2">
    <location>
        <begin position="240"/>
        <end position="268"/>
    </location>
</feature>
<feature type="topological domain" description="Extracellular" evidence="2">
    <location>
        <begin position="269"/>
        <end position="278"/>
    </location>
</feature>
<feature type="transmembrane region" description="Helical; Name=7" evidence="2">
    <location>
        <begin position="279"/>
        <end position="304"/>
    </location>
</feature>
<feature type="topological domain" description="Cytoplasmic" evidence="2">
    <location>
        <begin position="305"/>
        <end position="359"/>
    </location>
</feature>
<feature type="region of interest" description="Disordered" evidence="5">
    <location>
        <begin position="337"/>
        <end position="359"/>
    </location>
</feature>
<feature type="compositionally biased region" description="Polar residues" evidence="5">
    <location>
        <begin position="337"/>
        <end position="349"/>
    </location>
</feature>
<feature type="binding site" evidence="2">
    <location>
        <position position="15"/>
    </location>
    <ligand>
        <name>angiotensin II</name>
        <dbReference type="ChEBI" id="CHEBI:58506"/>
    </ligand>
</feature>
<feature type="binding site" evidence="2">
    <location>
        <position position="17"/>
    </location>
    <ligand>
        <name>angiotensin II</name>
        <dbReference type="ChEBI" id="CHEBI:58506"/>
    </ligand>
</feature>
<feature type="binding site" evidence="2">
    <location>
        <position position="167"/>
    </location>
    <ligand>
        <name>angiotensin II</name>
        <dbReference type="ChEBI" id="CHEBI:58506"/>
    </ligand>
</feature>
<feature type="binding site" evidence="2">
    <location>
        <position position="182"/>
    </location>
    <ligand>
        <name>angiotensin II</name>
        <dbReference type="ChEBI" id="CHEBI:58506"/>
    </ligand>
</feature>
<feature type="binding site" evidence="2">
    <location>
        <position position="183"/>
    </location>
    <ligand>
        <name>angiotensin II</name>
        <dbReference type="ChEBI" id="CHEBI:58506"/>
    </ligand>
</feature>
<feature type="binding site" evidence="2">
    <location>
        <position position="184"/>
    </location>
    <ligand>
        <name>angiotensin II</name>
        <dbReference type="ChEBI" id="CHEBI:58506"/>
    </ligand>
</feature>
<feature type="binding site" evidence="2">
    <location>
        <position position="199"/>
    </location>
    <ligand>
        <name>angiotensin II</name>
        <dbReference type="ChEBI" id="CHEBI:58506"/>
    </ligand>
</feature>
<feature type="lipid moiety-binding region" description="S-palmitoyl cysteine" evidence="3">
    <location>
        <position position="355"/>
    </location>
</feature>
<feature type="glycosylation site" description="N-linked (GlcNAc...) asparagine" evidence="3">
    <location>
        <position position="4"/>
    </location>
</feature>
<feature type="glycosylation site" description="N-linked (GlcNAc...) asparagine" evidence="3">
    <location>
        <position position="176"/>
    </location>
</feature>
<feature type="glycosylation site" description="N-linked (GlcNAc...) asparagine" evidence="3">
    <location>
        <position position="188"/>
    </location>
</feature>
<feature type="disulfide bond" evidence="2">
    <location>
        <begin position="18"/>
        <end position="274"/>
    </location>
</feature>
<feature type="disulfide bond" evidence="4">
    <location>
        <begin position="101"/>
        <end position="180"/>
    </location>
</feature>
<comment type="function">
    <text evidence="2">Receptor for angiotensin II, a vasoconstricting peptide, which acts as a key regulator of blood pressure and sodium retention by the kidney. The activated receptor in turn couples to G-alpha proteins G(q) (GNAQ, GNA11, GNA14 or GNA15) and thus activates phospholipase C and increases the cytosolic Ca(2+) concentrations, which in turn triggers cellular responses such as stimulation of protein kinase C.</text>
</comment>
<comment type="subunit">
    <text evidence="1 2">Interacts with MAS1 (By similarity). Interacts with ARRB1 (By similarity). Interacts with FLNA (via filamin repeat 21); increases PKA-mediated phosphorylation of FLNA (By similarity).</text>
</comment>
<comment type="subcellular location">
    <subcellularLocation>
        <location evidence="2">Cell membrane</location>
        <topology evidence="2">Multi-pass membrane protein</topology>
    </subcellularLocation>
</comment>
<comment type="tissue specificity">
    <text evidence="6">Expressed in liver, kidney, adrenal gland, heart and colon.</text>
</comment>
<comment type="PTM">
    <text evidence="2">C-terminal Ser or Thr residues may be phosphorylated.</text>
</comment>
<comment type="similarity">
    <text evidence="4">Belongs to the G-protein coupled receptor 1 family.</text>
</comment>
<reference key="1">
    <citation type="journal article" date="2000" name="Biol. Signals Recept.">
        <title>Molecular cloning of guinea pig angiotensin type 1 receptor.</title>
        <authorList>
            <person name="Hosoda Y."/>
            <person name="Fujino I."/>
            <person name="Akagawa K."/>
            <person name="Kuwahara A."/>
        </authorList>
    </citation>
    <scope>NUCLEOTIDE SEQUENCE [MRNA]</scope>
    <scope>TISSUE SPECIFICITY</scope>
    <source>
        <strain>Hartley</strain>
        <tissue>Liver</tissue>
    </source>
</reference>
<evidence type="ECO:0000250" key="1">
    <source>
        <dbReference type="UniProtKB" id="P25095"/>
    </source>
</evidence>
<evidence type="ECO:0000250" key="2">
    <source>
        <dbReference type="UniProtKB" id="P30556"/>
    </source>
</evidence>
<evidence type="ECO:0000255" key="3"/>
<evidence type="ECO:0000255" key="4">
    <source>
        <dbReference type="PROSITE-ProRule" id="PRU00521"/>
    </source>
</evidence>
<evidence type="ECO:0000256" key="5">
    <source>
        <dbReference type="SAM" id="MobiDB-lite"/>
    </source>
</evidence>
<evidence type="ECO:0000269" key="6">
    <source>
    </source>
</evidence>
<evidence type="ECO:0000303" key="7">
    <source>
    </source>
</evidence>
<dbReference type="EMBL" id="AF165888">
    <property type="protein sequence ID" value="AAD45383.1"/>
    <property type="molecule type" value="mRNA"/>
</dbReference>
<dbReference type="RefSeq" id="XP_013015005.1">
    <property type="nucleotide sequence ID" value="XM_013159551.1"/>
</dbReference>
<dbReference type="RefSeq" id="XP_013015006.1">
    <property type="nucleotide sequence ID" value="XM_013159552.1"/>
</dbReference>
<dbReference type="RefSeq" id="XP_013015007.1">
    <property type="nucleotide sequence ID" value="XM_013159553.1"/>
</dbReference>
<dbReference type="SMR" id="Q9WV26"/>
<dbReference type="FunCoup" id="Q9WV26">
    <property type="interactions" value="1276"/>
</dbReference>
<dbReference type="STRING" id="10141.ENSCPOP00000006858"/>
<dbReference type="BindingDB" id="Q9WV26"/>
<dbReference type="ChEMBL" id="CHEMBL1671613"/>
<dbReference type="DrugCentral" id="Q9WV26"/>
<dbReference type="GlyCosmos" id="Q9WV26">
    <property type="glycosylation" value="3 sites, No reported glycans"/>
</dbReference>
<dbReference type="Ensembl" id="ENSCPOT00000007683.3">
    <property type="protein sequence ID" value="ENSCPOP00000006858.2"/>
    <property type="gene ID" value="ENSCPOG00000007610.4"/>
</dbReference>
<dbReference type="GeneID" id="100192325"/>
<dbReference type="CTD" id="185"/>
<dbReference type="VEuPathDB" id="HostDB:ENSCPOG00000007610"/>
<dbReference type="eggNOG" id="KOG3656">
    <property type="taxonomic scope" value="Eukaryota"/>
</dbReference>
<dbReference type="GeneTree" id="ENSGT01130000278303"/>
<dbReference type="HOGENOM" id="CLU_009579_8_3_1"/>
<dbReference type="InParanoid" id="Q9WV26"/>
<dbReference type="OMA" id="QVFHFMQ"/>
<dbReference type="OrthoDB" id="8804420at2759"/>
<dbReference type="TreeFam" id="TF330024"/>
<dbReference type="Proteomes" id="UP000005447">
    <property type="component" value="Unassembled WGS sequence"/>
</dbReference>
<dbReference type="Bgee" id="ENSCPOG00000007610">
    <property type="expression patterns" value="Expressed in adrenal gland and 11 other cell types or tissues"/>
</dbReference>
<dbReference type="GO" id="GO:0009897">
    <property type="term" value="C:external side of plasma membrane"/>
    <property type="evidence" value="ECO:0007669"/>
    <property type="project" value="TreeGrafter"/>
</dbReference>
<dbReference type="GO" id="GO:0001596">
    <property type="term" value="F:angiotensin type I receptor activity"/>
    <property type="evidence" value="ECO:0000250"/>
    <property type="project" value="UniProtKB"/>
</dbReference>
<dbReference type="GO" id="GO:0004945">
    <property type="term" value="F:angiotensin type II receptor activity"/>
    <property type="evidence" value="ECO:0007669"/>
    <property type="project" value="Ensembl"/>
</dbReference>
<dbReference type="GO" id="GO:0031711">
    <property type="term" value="F:bradykinin receptor binding"/>
    <property type="evidence" value="ECO:0007669"/>
    <property type="project" value="Ensembl"/>
</dbReference>
<dbReference type="GO" id="GO:0019957">
    <property type="term" value="F:C-C chemokine binding"/>
    <property type="evidence" value="ECO:0007669"/>
    <property type="project" value="TreeGrafter"/>
</dbReference>
<dbReference type="GO" id="GO:0016493">
    <property type="term" value="F:C-C chemokine receptor activity"/>
    <property type="evidence" value="ECO:0007669"/>
    <property type="project" value="TreeGrafter"/>
</dbReference>
<dbReference type="GO" id="GO:0046982">
    <property type="term" value="F:protein heterodimerization activity"/>
    <property type="evidence" value="ECO:0007669"/>
    <property type="project" value="Ensembl"/>
</dbReference>
<dbReference type="GO" id="GO:0019722">
    <property type="term" value="P:calcium-mediated signaling"/>
    <property type="evidence" value="ECO:0007669"/>
    <property type="project" value="Ensembl"/>
</dbReference>
<dbReference type="GO" id="GO:0006955">
    <property type="term" value="P:immune response"/>
    <property type="evidence" value="ECO:0007669"/>
    <property type="project" value="TreeGrafter"/>
</dbReference>
<dbReference type="GO" id="GO:0001822">
    <property type="term" value="P:kidney development"/>
    <property type="evidence" value="ECO:0007669"/>
    <property type="project" value="Ensembl"/>
</dbReference>
<dbReference type="GO" id="GO:0002034">
    <property type="term" value="P:maintenance of blood vessel diameter homeostasis by renin-angiotensin"/>
    <property type="evidence" value="ECO:0000250"/>
    <property type="project" value="UniProtKB"/>
</dbReference>
<dbReference type="GO" id="GO:0030593">
    <property type="term" value="P:neutrophil chemotaxis"/>
    <property type="evidence" value="ECO:0007669"/>
    <property type="project" value="TreeGrafter"/>
</dbReference>
<dbReference type="GO" id="GO:1903589">
    <property type="term" value="P:positive regulation of blood vessel endothelial cell proliferation involved in sprouting angiogenesis"/>
    <property type="evidence" value="ECO:0007669"/>
    <property type="project" value="Ensembl"/>
</dbReference>
<dbReference type="GO" id="GO:0007204">
    <property type="term" value="P:positive regulation of cytosolic calcium ion concentration"/>
    <property type="evidence" value="ECO:0007669"/>
    <property type="project" value="Ensembl"/>
</dbReference>
<dbReference type="GO" id="GO:0010744">
    <property type="term" value="P:positive regulation of macrophage derived foam cell differentiation"/>
    <property type="evidence" value="ECO:0007669"/>
    <property type="project" value="Ensembl"/>
</dbReference>
<dbReference type="GO" id="GO:0051247">
    <property type="term" value="P:positive regulation of protein metabolic process"/>
    <property type="evidence" value="ECO:0007669"/>
    <property type="project" value="Ensembl"/>
</dbReference>
<dbReference type="GO" id="GO:0019229">
    <property type="term" value="P:regulation of vasoconstriction"/>
    <property type="evidence" value="ECO:0007669"/>
    <property type="project" value="Ensembl"/>
</dbReference>
<dbReference type="GO" id="GO:0007266">
    <property type="term" value="P:Rho protein signal transduction"/>
    <property type="evidence" value="ECO:0007669"/>
    <property type="project" value="Ensembl"/>
</dbReference>
<dbReference type="GO" id="GO:0046718">
    <property type="term" value="P:symbiont entry into host cell"/>
    <property type="evidence" value="ECO:0007669"/>
    <property type="project" value="Ensembl"/>
</dbReference>
<dbReference type="CDD" id="cd15192">
    <property type="entry name" value="7tmA_AT1R"/>
    <property type="match status" value="1"/>
</dbReference>
<dbReference type="FunFam" id="1.20.1070.10:FF:000088">
    <property type="entry name" value="Angiotensin II receptor type 1"/>
    <property type="match status" value="1"/>
</dbReference>
<dbReference type="Gene3D" id="1.20.1070.10">
    <property type="entry name" value="Rhodopsin 7-helix transmembrane proteins"/>
    <property type="match status" value="1"/>
</dbReference>
<dbReference type="InterPro" id="IPR000190">
    <property type="entry name" value="ATII_AT1_rcpt"/>
</dbReference>
<dbReference type="InterPro" id="IPR000248">
    <property type="entry name" value="ATII_rcpt"/>
</dbReference>
<dbReference type="InterPro" id="IPR050119">
    <property type="entry name" value="CCR1-9-like"/>
</dbReference>
<dbReference type="InterPro" id="IPR000276">
    <property type="entry name" value="GPCR_Rhodpsn"/>
</dbReference>
<dbReference type="InterPro" id="IPR017452">
    <property type="entry name" value="GPCR_Rhodpsn_7TM"/>
</dbReference>
<dbReference type="PANTHER" id="PTHR10489">
    <property type="entry name" value="CELL ADHESION MOLECULE"/>
    <property type="match status" value="1"/>
</dbReference>
<dbReference type="PANTHER" id="PTHR10489:SF956">
    <property type="entry name" value="TYPE-1 ANGIOTENSIN II RECEPTOR A"/>
    <property type="match status" value="1"/>
</dbReference>
<dbReference type="Pfam" id="PF00001">
    <property type="entry name" value="7tm_1"/>
    <property type="match status" value="1"/>
</dbReference>
<dbReference type="PRINTS" id="PR00241">
    <property type="entry name" value="ANGIOTENSINR"/>
</dbReference>
<dbReference type="PRINTS" id="PR00635">
    <property type="entry name" value="ANGIOTENSN1R"/>
</dbReference>
<dbReference type="PRINTS" id="PR00237">
    <property type="entry name" value="GPCRRHODOPSN"/>
</dbReference>
<dbReference type="SMART" id="SM01381">
    <property type="entry name" value="7TM_GPCR_Srsx"/>
    <property type="match status" value="1"/>
</dbReference>
<dbReference type="SUPFAM" id="SSF81321">
    <property type="entry name" value="Family A G protein-coupled receptor-like"/>
    <property type="match status" value="1"/>
</dbReference>
<dbReference type="PROSITE" id="PS00237">
    <property type="entry name" value="G_PROTEIN_RECEP_F1_1"/>
    <property type="match status" value="1"/>
</dbReference>
<dbReference type="PROSITE" id="PS50262">
    <property type="entry name" value="G_PROTEIN_RECEP_F1_2"/>
    <property type="match status" value="1"/>
</dbReference>
<gene>
    <name type="primary">AGTR1</name>
</gene>
<accession>Q9WV26</accession>
<sequence>MILNSSTEDGIKRIQDDCPKAGRHSYIFVMIPTLYSIIFVVGIFGNSLVVIVIYFYMKLKTVASVFLLNLALADICFLLTLPLWAVYTAMEYRWPFGNYLCKIASASVSFNLYASVFLLTCLSIDRYLAIVHPMKSRLRRTMLVAKVTCVIIWLMAGLASLPAVIHRNVFFIENTNITVCAFHYESQNSTLPIGLGLTKNILGFMFPFLIILTSYTLIWKALKKAYEIQKNKPRNDDIFKIIMAIVLFFFFSWVPHQIFTFLDVLIQLGIIHDCKISDIVDTAMPITICIAYFNNCLNPLFYGFLGKKFKKYFLQLLKYIPPKAKSHSTLSTKMSTLSYRPSDNVSSSAKKPVQCFEVE</sequence>
<keyword id="KW-1003">Cell membrane</keyword>
<keyword id="KW-1015">Disulfide bond</keyword>
<keyword id="KW-0297">G-protein coupled receptor</keyword>
<keyword id="KW-0325">Glycoprotein</keyword>
<keyword id="KW-0449">Lipoprotein</keyword>
<keyword id="KW-0472">Membrane</keyword>
<keyword id="KW-0564">Palmitate</keyword>
<keyword id="KW-0597">Phosphoprotein</keyword>
<keyword id="KW-0675">Receptor</keyword>
<keyword id="KW-1185">Reference proteome</keyword>
<keyword id="KW-0807">Transducer</keyword>
<keyword id="KW-0812">Transmembrane</keyword>
<keyword id="KW-1133">Transmembrane helix</keyword>
<name>AGTR1_CAVPO</name>